<name>WFDC5_PONAB</name>
<gene>
    <name type="primary">WFDC5</name>
</gene>
<reference key="1">
    <citation type="journal article" date="2007" name="Genome Res.">
        <title>Comparative sequence analyses reveal rapid and divergent evolutionary changes of the WFDC locus in the primate lineage.</title>
        <authorList>
            <consortium name="NISC comparative sequencing program"/>
            <person name="Hurle B."/>
            <person name="Swanson W."/>
            <person name="Green E.D."/>
        </authorList>
    </citation>
    <scope>NUCLEOTIDE SEQUENCE [GENOMIC DNA]</scope>
</reference>
<accession>A4K2V3</accession>
<comment type="function">
    <text evidence="1">Putative acid-stable proteinase inhibitor.</text>
</comment>
<comment type="subcellular location">
    <subcellularLocation>
        <location evidence="4">Secreted</location>
    </subcellularLocation>
</comment>
<evidence type="ECO:0000250" key="1"/>
<evidence type="ECO:0000255" key="2"/>
<evidence type="ECO:0000255" key="3">
    <source>
        <dbReference type="PROSITE-ProRule" id="PRU00722"/>
    </source>
</evidence>
<evidence type="ECO:0000305" key="4"/>
<sequence>MRIQSLLLLGALLAVGSQLPAVFGRKKGEKSGGCPPDDGPCLLSVPDQCVEDSQCPLTRKCCYRACFRQCVPRVSVKLGSCPEDQLRCLSPMNHLCHKDSDCSGKKRCCHSACGRDCRDPARG</sequence>
<proteinExistence type="inferred from homology"/>
<feature type="signal peptide" evidence="2">
    <location>
        <begin position="1"/>
        <end position="24"/>
    </location>
</feature>
<feature type="chain" id="PRO_0000289643" description="WAP four-disulfide core domain protein 5">
    <location>
        <begin position="25"/>
        <end position="123"/>
    </location>
</feature>
<feature type="domain" description="WAP 1" evidence="3">
    <location>
        <begin position="27"/>
        <end position="73"/>
    </location>
</feature>
<feature type="domain" description="WAP 2" evidence="3">
    <location>
        <begin position="74"/>
        <end position="121"/>
    </location>
</feature>
<feature type="disulfide bond" evidence="3">
    <location>
        <begin position="34"/>
        <end position="62"/>
    </location>
</feature>
<feature type="disulfide bond" evidence="3">
    <location>
        <begin position="41"/>
        <end position="66"/>
    </location>
</feature>
<feature type="disulfide bond" evidence="3">
    <location>
        <begin position="49"/>
        <end position="61"/>
    </location>
</feature>
<feature type="disulfide bond" evidence="3">
    <location>
        <begin position="55"/>
        <end position="70"/>
    </location>
</feature>
<feature type="disulfide bond" evidence="3">
    <location>
        <begin position="81"/>
        <end position="109"/>
    </location>
</feature>
<feature type="disulfide bond" evidence="3">
    <location>
        <begin position="88"/>
        <end position="113"/>
    </location>
</feature>
<feature type="disulfide bond" evidence="3">
    <location>
        <begin position="96"/>
        <end position="108"/>
    </location>
</feature>
<feature type="disulfide bond" evidence="3">
    <location>
        <begin position="102"/>
        <end position="117"/>
    </location>
</feature>
<keyword id="KW-1015">Disulfide bond</keyword>
<keyword id="KW-0646">Protease inhibitor</keyword>
<keyword id="KW-1185">Reference proteome</keyword>
<keyword id="KW-0677">Repeat</keyword>
<keyword id="KW-0964">Secreted</keyword>
<keyword id="KW-0722">Serine protease inhibitor</keyword>
<keyword id="KW-0732">Signal</keyword>
<dbReference type="EMBL" id="DP000045">
    <property type="protein sequence ID" value="ABO52988.1"/>
    <property type="molecule type" value="Genomic_DNA"/>
</dbReference>
<dbReference type="RefSeq" id="NP_001162066.1">
    <property type="nucleotide sequence ID" value="NM_001168595.1"/>
</dbReference>
<dbReference type="RefSeq" id="XP_054397343.1">
    <property type="nucleotide sequence ID" value="XM_054541368.2"/>
</dbReference>
<dbReference type="SMR" id="A4K2V3"/>
<dbReference type="STRING" id="9601.ENSPPYP00000012338"/>
<dbReference type="GeneID" id="100137044"/>
<dbReference type="KEGG" id="pon:100137044"/>
<dbReference type="CTD" id="149708"/>
<dbReference type="eggNOG" id="ENOG502S99V">
    <property type="taxonomic scope" value="Eukaryota"/>
</dbReference>
<dbReference type="HOGENOM" id="CLU_105901_2_0_1"/>
<dbReference type="InParanoid" id="A4K2V3"/>
<dbReference type="OrthoDB" id="4473401at2759"/>
<dbReference type="TreeFam" id="TF338375"/>
<dbReference type="Proteomes" id="UP000001595">
    <property type="component" value="Chromosome 20"/>
</dbReference>
<dbReference type="GO" id="GO:0005615">
    <property type="term" value="C:extracellular space"/>
    <property type="evidence" value="ECO:0007669"/>
    <property type="project" value="TreeGrafter"/>
</dbReference>
<dbReference type="GO" id="GO:0004867">
    <property type="term" value="F:serine-type endopeptidase inhibitor activity"/>
    <property type="evidence" value="ECO:0007669"/>
    <property type="project" value="UniProtKB-KW"/>
</dbReference>
<dbReference type="GO" id="GO:0019731">
    <property type="term" value="P:antibacterial humoral response"/>
    <property type="evidence" value="ECO:0007669"/>
    <property type="project" value="TreeGrafter"/>
</dbReference>
<dbReference type="GO" id="GO:0045087">
    <property type="term" value="P:innate immune response"/>
    <property type="evidence" value="ECO:0007669"/>
    <property type="project" value="TreeGrafter"/>
</dbReference>
<dbReference type="Gene3D" id="4.10.75.10">
    <property type="entry name" value="Elafin-like"/>
    <property type="match status" value="2"/>
</dbReference>
<dbReference type="InterPro" id="IPR036645">
    <property type="entry name" value="Elafin-like_sf"/>
</dbReference>
<dbReference type="InterPro" id="IPR008197">
    <property type="entry name" value="WAP_dom"/>
</dbReference>
<dbReference type="InterPro" id="IPR050514">
    <property type="entry name" value="WAP_four-disulfide_core"/>
</dbReference>
<dbReference type="PANTHER" id="PTHR19441:SF39">
    <property type="entry name" value="WAP FOUR-DISULFIDE CORE DOMAIN PROTEIN 5"/>
    <property type="match status" value="1"/>
</dbReference>
<dbReference type="PANTHER" id="PTHR19441">
    <property type="entry name" value="WHEY ACDIC PROTEIN WAP"/>
    <property type="match status" value="1"/>
</dbReference>
<dbReference type="Pfam" id="PF00095">
    <property type="entry name" value="WAP"/>
    <property type="match status" value="2"/>
</dbReference>
<dbReference type="PRINTS" id="PR00003">
    <property type="entry name" value="4DISULPHCORE"/>
</dbReference>
<dbReference type="SMART" id="SM00217">
    <property type="entry name" value="WAP"/>
    <property type="match status" value="2"/>
</dbReference>
<dbReference type="SUPFAM" id="SSF57256">
    <property type="entry name" value="Elafin-like"/>
    <property type="match status" value="2"/>
</dbReference>
<dbReference type="PROSITE" id="PS51390">
    <property type="entry name" value="WAP"/>
    <property type="match status" value="2"/>
</dbReference>
<organism>
    <name type="scientific">Pongo abelii</name>
    <name type="common">Sumatran orangutan</name>
    <name type="synonym">Pongo pygmaeus abelii</name>
    <dbReference type="NCBI Taxonomy" id="9601"/>
    <lineage>
        <taxon>Eukaryota</taxon>
        <taxon>Metazoa</taxon>
        <taxon>Chordata</taxon>
        <taxon>Craniata</taxon>
        <taxon>Vertebrata</taxon>
        <taxon>Euteleostomi</taxon>
        <taxon>Mammalia</taxon>
        <taxon>Eutheria</taxon>
        <taxon>Euarchontoglires</taxon>
        <taxon>Primates</taxon>
        <taxon>Haplorrhini</taxon>
        <taxon>Catarrhini</taxon>
        <taxon>Hominidae</taxon>
        <taxon>Pongo</taxon>
    </lineage>
</organism>
<protein>
    <recommendedName>
        <fullName>WAP four-disulfide core domain protein 5</fullName>
    </recommendedName>
</protein>